<comment type="function">
    <text evidence="1">Catalyzes the phosphorolysis of diverse nucleosides, yielding D-ribose 1-phosphate and the respective free bases. Can use uridine, adenosine, guanosine, cytidine, thymidine, inosine and xanthosine as substrates. Also catalyzes the reverse reactions.</text>
</comment>
<comment type="catalytic activity">
    <reaction evidence="1">
        <text>a purine D-ribonucleoside + phosphate = a purine nucleobase + alpha-D-ribose 1-phosphate</text>
        <dbReference type="Rhea" id="RHEA:19805"/>
        <dbReference type="ChEBI" id="CHEBI:26386"/>
        <dbReference type="ChEBI" id="CHEBI:43474"/>
        <dbReference type="ChEBI" id="CHEBI:57720"/>
        <dbReference type="ChEBI" id="CHEBI:142355"/>
        <dbReference type="EC" id="2.4.2.1"/>
    </reaction>
</comment>
<comment type="catalytic activity">
    <reaction evidence="1">
        <text>adenosine + phosphate = alpha-D-ribose 1-phosphate + adenine</text>
        <dbReference type="Rhea" id="RHEA:27642"/>
        <dbReference type="ChEBI" id="CHEBI:16335"/>
        <dbReference type="ChEBI" id="CHEBI:16708"/>
        <dbReference type="ChEBI" id="CHEBI:43474"/>
        <dbReference type="ChEBI" id="CHEBI:57720"/>
        <dbReference type="EC" id="2.4.2.1"/>
    </reaction>
</comment>
<comment type="catalytic activity">
    <reaction evidence="1">
        <text>cytidine + phosphate = cytosine + alpha-D-ribose 1-phosphate</text>
        <dbReference type="Rhea" id="RHEA:52540"/>
        <dbReference type="ChEBI" id="CHEBI:16040"/>
        <dbReference type="ChEBI" id="CHEBI:17562"/>
        <dbReference type="ChEBI" id="CHEBI:43474"/>
        <dbReference type="ChEBI" id="CHEBI:57720"/>
        <dbReference type="EC" id="2.4.2.2"/>
    </reaction>
</comment>
<comment type="catalytic activity">
    <reaction evidence="1">
        <text>guanosine + phosphate = alpha-D-ribose 1-phosphate + guanine</text>
        <dbReference type="Rhea" id="RHEA:13233"/>
        <dbReference type="ChEBI" id="CHEBI:16235"/>
        <dbReference type="ChEBI" id="CHEBI:16750"/>
        <dbReference type="ChEBI" id="CHEBI:43474"/>
        <dbReference type="ChEBI" id="CHEBI:57720"/>
        <dbReference type="EC" id="2.4.2.1"/>
    </reaction>
</comment>
<comment type="catalytic activity">
    <reaction evidence="1">
        <text>inosine + phosphate = alpha-D-ribose 1-phosphate + hypoxanthine</text>
        <dbReference type="Rhea" id="RHEA:27646"/>
        <dbReference type="ChEBI" id="CHEBI:17368"/>
        <dbReference type="ChEBI" id="CHEBI:17596"/>
        <dbReference type="ChEBI" id="CHEBI:43474"/>
        <dbReference type="ChEBI" id="CHEBI:57720"/>
        <dbReference type="EC" id="2.4.2.1"/>
    </reaction>
</comment>
<comment type="catalytic activity">
    <reaction evidence="1">
        <text>thymidine + phosphate = 2-deoxy-alpha-D-ribose 1-phosphate + thymine</text>
        <dbReference type="Rhea" id="RHEA:16037"/>
        <dbReference type="ChEBI" id="CHEBI:17748"/>
        <dbReference type="ChEBI" id="CHEBI:17821"/>
        <dbReference type="ChEBI" id="CHEBI:43474"/>
        <dbReference type="ChEBI" id="CHEBI:57259"/>
        <dbReference type="EC" id="2.4.2.2"/>
    </reaction>
</comment>
<comment type="catalytic activity">
    <reaction evidence="1">
        <text>uridine + phosphate = alpha-D-ribose 1-phosphate + uracil</text>
        <dbReference type="Rhea" id="RHEA:24388"/>
        <dbReference type="ChEBI" id="CHEBI:16704"/>
        <dbReference type="ChEBI" id="CHEBI:17568"/>
        <dbReference type="ChEBI" id="CHEBI:43474"/>
        <dbReference type="ChEBI" id="CHEBI:57720"/>
        <dbReference type="EC" id="2.4.2.2"/>
    </reaction>
</comment>
<comment type="catalytic activity">
    <reaction evidence="1">
        <text>xanthosine + phosphate = alpha-D-ribose 1-phosphate + xanthine</text>
        <dbReference type="Rhea" id="RHEA:27638"/>
        <dbReference type="ChEBI" id="CHEBI:17712"/>
        <dbReference type="ChEBI" id="CHEBI:18107"/>
        <dbReference type="ChEBI" id="CHEBI:43474"/>
        <dbReference type="ChEBI" id="CHEBI:57720"/>
        <dbReference type="EC" id="2.4.2.1"/>
    </reaction>
</comment>
<comment type="similarity">
    <text evidence="1">Belongs to the nucleoside phosphorylase PpnP family.</text>
</comment>
<name>PPNP_ECO45</name>
<reference key="1">
    <citation type="journal article" date="2009" name="PLoS Genet.">
        <title>Organised genome dynamics in the Escherichia coli species results in highly diverse adaptive paths.</title>
        <authorList>
            <person name="Touchon M."/>
            <person name="Hoede C."/>
            <person name="Tenaillon O."/>
            <person name="Barbe V."/>
            <person name="Baeriswyl S."/>
            <person name="Bidet P."/>
            <person name="Bingen E."/>
            <person name="Bonacorsi S."/>
            <person name="Bouchier C."/>
            <person name="Bouvet O."/>
            <person name="Calteau A."/>
            <person name="Chiapello H."/>
            <person name="Clermont O."/>
            <person name="Cruveiller S."/>
            <person name="Danchin A."/>
            <person name="Diard M."/>
            <person name="Dossat C."/>
            <person name="Karoui M.E."/>
            <person name="Frapy E."/>
            <person name="Garry L."/>
            <person name="Ghigo J.M."/>
            <person name="Gilles A.M."/>
            <person name="Johnson J."/>
            <person name="Le Bouguenec C."/>
            <person name="Lescat M."/>
            <person name="Mangenot S."/>
            <person name="Martinez-Jehanne V."/>
            <person name="Matic I."/>
            <person name="Nassif X."/>
            <person name="Oztas S."/>
            <person name="Petit M.A."/>
            <person name="Pichon C."/>
            <person name="Rouy Z."/>
            <person name="Ruf C.S."/>
            <person name="Schneider D."/>
            <person name="Tourret J."/>
            <person name="Vacherie B."/>
            <person name="Vallenet D."/>
            <person name="Medigue C."/>
            <person name="Rocha E.P.C."/>
            <person name="Denamur E."/>
        </authorList>
    </citation>
    <scope>NUCLEOTIDE SEQUENCE [LARGE SCALE GENOMIC DNA]</scope>
    <source>
        <strain>S88 / ExPEC</strain>
    </source>
</reference>
<feature type="chain" id="PRO_1000198662" description="Pyrimidine/purine nucleoside phosphorylase">
    <location>
        <begin position="1"/>
        <end position="94"/>
    </location>
</feature>
<gene>
    <name evidence="1" type="primary">ppnP</name>
    <name type="ordered locus">ECS88_0386</name>
</gene>
<keyword id="KW-0328">Glycosyltransferase</keyword>
<keyword id="KW-1185">Reference proteome</keyword>
<keyword id="KW-0808">Transferase</keyword>
<sequence>MLQSNEYFSGKVKSIGFSSSSTGRASVGVMVEGEYTFSTAEPEEMTVISGALNVLLPDATDWQVYEAGSVFNVPGHSEFHLQVAEPTSYLCRYL</sequence>
<evidence type="ECO:0000255" key="1">
    <source>
        <dbReference type="HAMAP-Rule" id="MF_01537"/>
    </source>
</evidence>
<protein>
    <recommendedName>
        <fullName evidence="1">Pyrimidine/purine nucleoside phosphorylase</fullName>
        <ecNumber evidence="1">2.4.2.1</ecNumber>
        <ecNumber evidence="1">2.4.2.2</ecNumber>
    </recommendedName>
    <alternativeName>
        <fullName evidence="1">Adenosine phosphorylase</fullName>
    </alternativeName>
    <alternativeName>
        <fullName evidence="1">Cytidine phosphorylase</fullName>
    </alternativeName>
    <alternativeName>
        <fullName evidence="1">Guanosine phosphorylase</fullName>
    </alternativeName>
    <alternativeName>
        <fullName evidence="1">Inosine phosphorylase</fullName>
    </alternativeName>
    <alternativeName>
        <fullName evidence="1">Thymidine phosphorylase</fullName>
    </alternativeName>
    <alternativeName>
        <fullName evidence="1">Uridine phosphorylase</fullName>
    </alternativeName>
    <alternativeName>
        <fullName evidence="1">Xanthosine phosphorylase</fullName>
    </alternativeName>
</protein>
<accession>B7MD50</accession>
<dbReference type="EC" id="2.4.2.1" evidence="1"/>
<dbReference type="EC" id="2.4.2.2" evidence="1"/>
<dbReference type="EMBL" id="CU928161">
    <property type="protein sequence ID" value="CAR01735.1"/>
    <property type="molecule type" value="Genomic_DNA"/>
</dbReference>
<dbReference type="RefSeq" id="WP_000941942.1">
    <property type="nucleotide sequence ID" value="NC_011742.1"/>
</dbReference>
<dbReference type="SMR" id="B7MD50"/>
<dbReference type="GeneID" id="93777070"/>
<dbReference type="KEGG" id="ecz:ECS88_0386"/>
<dbReference type="HOGENOM" id="CLU_157874_0_0_6"/>
<dbReference type="Proteomes" id="UP000000747">
    <property type="component" value="Chromosome"/>
</dbReference>
<dbReference type="GO" id="GO:0005829">
    <property type="term" value="C:cytosol"/>
    <property type="evidence" value="ECO:0007669"/>
    <property type="project" value="TreeGrafter"/>
</dbReference>
<dbReference type="GO" id="GO:0047975">
    <property type="term" value="F:guanosine phosphorylase activity"/>
    <property type="evidence" value="ECO:0007669"/>
    <property type="project" value="UniProtKB-EC"/>
</dbReference>
<dbReference type="GO" id="GO:0004731">
    <property type="term" value="F:purine-nucleoside phosphorylase activity"/>
    <property type="evidence" value="ECO:0007669"/>
    <property type="project" value="UniProtKB-UniRule"/>
</dbReference>
<dbReference type="GO" id="GO:0009032">
    <property type="term" value="F:thymidine phosphorylase activity"/>
    <property type="evidence" value="ECO:0007669"/>
    <property type="project" value="UniProtKB-EC"/>
</dbReference>
<dbReference type="GO" id="GO:0004850">
    <property type="term" value="F:uridine phosphorylase activity"/>
    <property type="evidence" value="ECO:0007669"/>
    <property type="project" value="UniProtKB-EC"/>
</dbReference>
<dbReference type="CDD" id="cd20296">
    <property type="entry name" value="cupin_PpnP-like"/>
    <property type="match status" value="1"/>
</dbReference>
<dbReference type="FunFam" id="2.60.120.10:FF:000016">
    <property type="entry name" value="Pyrimidine/purine nucleoside phosphorylase"/>
    <property type="match status" value="1"/>
</dbReference>
<dbReference type="Gene3D" id="2.60.120.10">
    <property type="entry name" value="Jelly Rolls"/>
    <property type="match status" value="1"/>
</dbReference>
<dbReference type="HAMAP" id="MF_01537">
    <property type="entry name" value="Nucleos_phosphorylase_PpnP"/>
    <property type="match status" value="1"/>
</dbReference>
<dbReference type="InterPro" id="IPR009664">
    <property type="entry name" value="Ppnp"/>
</dbReference>
<dbReference type="InterPro" id="IPR014710">
    <property type="entry name" value="RmlC-like_jellyroll"/>
</dbReference>
<dbReference type="InterPro" id="IPR011051">
    <property type="entry name" value="RmlC_Cupin_sf"/>
</dbReference>
<dbReference type="NCBIfam" id="NF007875">
    <property type="entry name" value="PRK10579.1"/>
    <property type="match status" value="1"/>
</dbReference>
<dbReference type="PANTHER" id="PTHR36540">
    <property type="entry name" value="PYRIMIDINE/PURINE NUCLEOSIDE PHOSPHORYLASE"/>
    <property type="match status" value="1"/>
</dbReference>
<dbReference type="PANTHER" id="PTHR36540:SF1">
    <property type="entry name" value="PYRIMIDINE_PURINE NUCLEOSIDE PHOSPHORYLASE"/>
    <property type="match status" value="1"/>
</dbReference>
<dbReference type="Pfam" id="PF06865">
    <property type="entry name" value="Ppnp"/>
    <property type="match status" value="1"/>
</dbReference>
<dbReference type="SUPFAM" id="SSF51182">
    <property type="entry name" value="RmlC-like cupins"/>
    <property type="match status" value="1"/>
</dbReference>
<organism>
    <name type="scientific">Escherichia coli O45:K1 (strain S88 / ExPEC)</name>
    <dbReference type="NCBI Taxonomy" id="585035"/>
    <lineage>
        <taxon>Bacteria</taxon>
        <taxon>Pseudomonadati</taxon>
        <taxon>Pseudomonadota</taxon>
        <taxon>Gammaproteobacteria</taxon>
        <taxon>Enterobacterales</taxon>
        <taxon>Enterobacteriaceae</taxon>
        <taxon>Escherichia</taxon>
    </lineage>
</organism>
<proteinExistence type="inferred from homology"/>